<evidence type="ECO:0000250" key="1"/>
<evidence type="ECO:0000256" key="2">
    <source>
        <dbReference type="SAM" id="MobiDB-lite"/>
    </source>
</evidence>
<evidence type="ECO:0000269" key="3">
    <source>
    </source>
</evidence>
<evidence type="ECO:0000305" key="4"/>
<sequence>MKLLKKPAGLKKRKVISKRIKIEKKPSSEDEGSSDEEVPKLDGEGSLDGSEDEDDGTVTVEKGGVKKHKLDLEKLKQSDPEFFKFLQQEDADLLNMEDDGDDDEDDDEDDEDEEEEESDDDEDDEEDDDKTKIKKIRKPKIKSDNSGRLIVDSNVYSYLQQVLVLDDETSTPTNPSDVRMAVDVFVACVARVGADIEAPKYVINEQSIFEAVVRMCFQAMPDILKRLLKAKPEGDKVLFSKTAIKKYQTYVRTYLHAMIVFLNEVQTTEVLIATIKAMTRLVDLYAHFSRMSKLLIKAVVRIWSRKTLECRLPAFVCMNLLVKNYPQHFVPLYKTAYVAFVANSKIVTNETWPLLQFMHRTFAELTILNPEQAYKYAFVYIRQTAVHLRNAMISKGRKDLIFSIYNWQMMQCMYMWVRVIAKAHSVNGAEQIGELVYPLIQVIVGIFKLCNAPTFLPLRLHCCQLLIQLQASCTNYIPILQVSCDCLEELARELKSKPKPVKGAVKLPDIECTLKCSSQFSDLPQWRKVISEHVFRTMMQSAHLLASQAAFPDVVLPINHRISAILETMKNGDHAHLFRGFQTKLKEHSRFVLDVLARKSVDINDEMQVRAVRFDLNNPDSPIKTFYRQWEKVWKMKERSAVENSKKDDKKKKKEEEAAAAKKRKPNETVEDEDDVKPEVSKAKRKRIKIGAAAKKADASVPDQFADMSMWSDED</sequence>
<reference key="1">
    <citation type="journal article" date="2006" name="Dev. Biol.">
        <title>Alterations in ribosome biogenesis cause specific defects in C. elegans hermaphrodite gonadogenesis.</title>
        <authorList>
            <person name="Voutev R."/>
            <person name="Killian D.J."/>
            <person name="Ahn J.H."/>
            <person name="Hubbard E.J.A."/>
        </authorList>
    </citation>
    <scope>NUCLEOTIDE SEQUENCE [MRNA]</scope>
    <scope>FUNCTION</scope>
    <scope>DISRUPTION PHENOTYPE</scope>
</reference>
<reference key="2">
    <citation type="journal article" date="1998" name="Science">
        <title>Genome sequence of the nematode C. elegans: a platform for investigating biology.</title>
        <authorList>
            <consortium name="The C. elegans sequencing consortium"/>
        </authorList>
    </citation>
    <scope>NUCLEOTIDE SEQUENCE [LARGE SCALE GENOMIC DNA]</scope>
    <source>
        <strain>Bristol N2</strain>
    </source>
</reference>
<comment type="function">
    <text evidence="3">Required for normal somatic gonad development and for regulation of germline development and proliferation.</text>
</comment>
<comment type="subcellular location">
    <subcellularLocation>
        <location evidence="1">Nucleus</location>
    </subcellularLocation>
</comment>
<comment type="disruption phenotype">
    <text evidence="3">Worms exhibit slow growth and sterility caused by germline proliferation defective phenotype (Glp) or proximal germ cell proliferation abnormal phenotype (Pro).</text>
</comment>
<comment type="similarity">
    <text evidence="4">Belongs to the NOC2 family.</text>
</comment>
<keyword id="KW-0217">Developmental protein</keyword>
<keyword id="KW-0221">Differentiation</keyword>
<keyword id="KW-0334">Gonadal differentiation</keyword>
<keyword id="KW-0539">Nucleus</keyword>
<keyword id="KW-1185">Reference proteome</keyword>
<accession>O17580</accession>
<accession>A7UGI7</accession>
<accession>O17971</accession>
<accession>O18163</accession>
<accession>Q17785</accession>
<feature type="chain" id="PRO_0000121051" description="Nucleolar complex protein 2 homolog">
    <location>
        <begin position="1"/>
        <end position="715"/>
    </location>
</feature>
<feature type="region of interest" description="Disordered" evidence="2">
    <location>
        <begin position="17"/>
        <end position="71"/>
    </location>
</feature>
<feature type="region of interest" description="Disordered" evidence="2">
    <location>
        <begin position="85"/>
        <end position="132"/>
    </location>
</feature>
<feature type="region of interest" description="Disordered" evidence="2">
    <location>
        <begin position="638"/>
        <end position="715"/>
    </location>
</feature>
<feature type="compositionally biased region" description="Acidic residues" evidence="2">
    <location>
        <begin position="89"/>
        <end position="128"/>
    </location>
</feature>
<feature type="compositionally biased region" description="Basic and acidic residues" evidence="2">
    <location>
        <begin position="638"/>
        <end position="660"/>
    </location>
</feature>
<dbReference type="EMBL" id="EU068465">
    <property type="protein sequence ID" value="ABU49430.1"/>
    <property type="molecule type" value="mRNA"/>
</dbReference>
<dbReference type="EMBL" id="Z49908">
    <property type="protein sequence ID" value="CAA90103.2"/>
    <property type="molecule type" value="Genomic_DNA"/>
</dbReference>
<dbReference type="EMBL" id="Z81573">
    <property type="protein sequence ID" value="CAA90103.2"/>
    <property type="status" value="JOINED"/>
    <property type="molecule type" value="Genomic_DNA"/>
</dbReference>
<dbReference type="EMBL" id="Z99268">
    <property type="protein sequence ID" value="CAA90103.2"/>
    <property type="status" value="JOINED"/>
    <property type="molecule type" value="Genomic_DNA"/>
</dbReference>
<dbReference type="PIR" id="T19060">
    <property type="entry name" value="T19060"/>
</dbReference>
<dbReference type="RefSeq" id="NP_496224.2">
    <property type="nucleotide sequence ID" value="NM_063823.6"/>
</dbReference>
<dbReference type="SMR" id="O17580"/>
<dbReference type="BioGRID" id="39917">
    <property type="interactions" value="5"/>
</dbReference>
<dbReference type="FunCoup" id="O17580">
    <property type="interactions" value="2109"/>
</dbReference>
<dbReference type="IntAct" id="O17580">
    <property type="interactions" value="1"/>
</dbReference>
<dbReference type="STRING" id="6239.C07E3.2.1"/>
<dbReference type="iPTMnet" id="O17580"/>
<dbReference type="PaxDb" id="6239-C07E3.2"/>
<dbReference type="PeptideAtlas" id="O17580"/>
<dbReference type="EnsemblMetazoa" id="C07E3.2.1">
    <property type="protein sequence ID" value="C07E3.2.1"/>
    <property type="gene ID" value="WBGene00007413"/>
</dbReference>
<dbReference type="GeneID" id="174598"/>
<dbReference type="KEGG" id="cel:CELE_C07E3.2"/>
<dbReference type="UCSC" id="C07E3.2.1">
    <property type="organism name" value="c. elegans"/>
</dbReference>
<dbReference type="AGR" id="WB:WBGene00007413"/>
<dbReference type="CTD" id="174598"/>
<dbReference type="WormBase" id="C07E3.2">
    <property type="protein sequence ID" value="CE47947"/>
    <property type="gene ID" value="WBGene00007413"/>
    <property type="gene designation" value="pro-2"/>
</dbReference>
<dbReference type="eggNOG" id="KOG2256">
    <property type="taxonomic scope" value="Eukaryota"/>
</dbReference>
<dbReference type="GeneTree" id="ENSGT00390000010057"/>
<dbReference type="HOGENOM" id="CLU_399139_0_0_1"/>
<dbReference type="InParanoid" id="O17580"/>
<dbReference type="OMA" id="GCLRYYL"/>
<dbReference type="OrthoDB" id="10266662at2759"/>
<dbReference type="PhylomeDB" id="O17580"/>
<dbReference type="PRO" id="PR:O17580"/>
<dbReference type="Proteomes" id="UP000001940">
    <property type="component" value="Chromosome II"/>
</dbReference>
<dbReference type="Bgee" id="WBGene00007413">
    <property type="expression patterns" value="Expressed in larva and 4 other cell types or tissues"/>
</dbReference>
<dbReference type="GO" id="GO:0030690">
    <property type="term" value="C:Noc1p-Noc2p complex"/>
    <property type="evidence" value="ECO:0000318"/>
    <property type="project" value="GO_Central"/>
</dbReference>
<dbReference type="GO" id="GO:0030691">
    <property type="term" value="C:Noc2p-Noc3p complex"/>
    <property type="evidence" value="ECO:0000318"/>
    <property type="project" value="GO_Central"/>
</dbReference>
<dbReference type="GO" id="GO:0005730">
    <property type="term" value="C:nucleolus"/>
    <property type="evidence" value="ECO:0000318"/>
    <property type="project" value="GO_Central"/>
</dbReference>
<dbReference type="GO" id="GO:0005654">
    <property type="term" value="C:nucleoplasm"/>
    <property type="evidence" value="ECO:0000318"/>
    <property type="project" value="GO_Central"/>
</dbReference>
<dbReference type="GO" id="GO:0042393">
    <property type="term" value="F:histone binding"/>
    <property type="evidence" value="ECO:0000318"/>
    <property type="project" value="GO_Central"/>
</dbReference>
<dbReference type="GO" id="GO:0003714">
    <property type="term" value="F:transcription corepressor activity"/>
    <property type="evidence" value="ECO:0000318"/>
    <property type="project" value="GO_Central"/>
</dbReference>
<dbReference type="GO" id="GO:0030154">
    <property type="term" value="P:cell differentiation"/>
    <property type="evidence" value="ECO:0007669"/>
    <property type="project" value="UniProtKB-KW"/>
</dbReference>
<dbReference type="GO" id="GO:0007506">
    <property type="term" value="P:gonadal mesoderm development"/>
    <property type="evidence" value="ECO:0007669"/>
    <property type="project" value="UniProtKB-KW"/>
</dbReference>
<dbReference type="GO" id="GO:0000122">
    <property type="term" value="P:negative regulation of transcription by RNA polymerase II"/>
    <property type="evidence" value="ECO:0000318"/>
    <property type="project" value="GO_Central"/>
</dbReference>
<dbReference type="GO" id="GO:0042273">
    <property type="term" value="P:ribosomal large subunit biogenesis"/>
    <property type="evidence" value="ECO:0000318"/>
    <property type="project" value="GO_Central"/>
</dbReference>
<dbReference type="InterPro" id="IPR016024">
    <property type="entry name" value="ARM-type_fold"/>
</dbReference>
<dbReference type="InterPro" id="IPR005343">
    <property type="entry name" value="Noc2"/>
</dbReference>
<dbReference type="PANTHER" id="PTHR12687">
    <property type="entry name" value="NUCLEOLAR COMPLEX 2 AND RAD4-RELATED"/>
    <property type="match status" value="1"/>
</dbReference>
<dbReference type="PANTHER" id="PTHR12687:SF4">
    <property type="entry name" value="NUCLEOLAR COMPLEX PROTEIN 2 HOMOLOG"/>
    <property type="match status" value="1"/>
</dbReference>
<dbReference type="Pfam" id="PF03715">
    <property type="entry name" value="Noc2"/>
    <property type="match status" value="1"/>
</dbReference>
<dbReference type="SUPFAM" id="SSF48371">
    <property type="entry name" value="ARM repeat"/>
    <property type="match status" value="1"/>
</dbReference>
<organism>
    <name type="scientific">Caenorhabditis elegans</name>
    <dbReference type="NCBI Taxonomy" id="6239"/>
    <lineage>
        <taxon>Eukaryota</taxon>
        <taxon>Metazoa</taxon>
        <taxon>Ecdysozoa</taxon>
        <taxon>Nematoda</taxon>
        <taxon>Chromadorea</taxon>
        <taxon>Rhabditida</taxon>
        <taxon>Rhabditina</taxon>
        <taxon>Rhabditomorpha</taxon>
        <taxon>Rhabditoidea</taxon>
        <taxon>Rhabditidae</taxon>
        <taxon>Peloderinae</taxon>
        <taxon>Caenorhabditis</taxon>
    </lineage>
</organism>
<gene>
    <name type="primary">pro-2</name>
    <name type="ORF">C07E3.2</name>
</gene>
<proteinExistence type="evidence at transcript level"/>
<protein>
    <recommendedName>
        <fullName>Nucleolar complex protein 2 homolog</fullName>
        <shortName>Protein NOC2 homolog</shortName>
    </recommendedName>
    <alternativeName>
        <fullName>Proximal proliferation in germline protein 2</fullName>
    </alternativeName>
</protein>
<name>NOC2L_CAEEL</name>